<keyword id="KW-0998">Cell outer membrane</keyword>
<keyword id="KW-0133">Cell shape</keyword>
<keyword id="KW-0449">Lipoprotein</keyword>
<keyword id="KW-0472">Membrane</keyword>
<keyword id="KW-0564">Palmitate</keyword>
<keyword id="KW-0573">Peptidoglycan synthesis</keyword>
<keyword id="KW-0732">Signal</keyword>
<name>LPOA_PECPW</name>
<gene>
    <name evidence="1" type="primary">lpoA</name>
    <name type="ordered locus">Pecwa_0314</name>
</gene>
<sequence>MLPFHLVRTQAGRVIPVLLAALFLAGCPSHAPQSPPPEVQGKADASSDYYLQQMQQSSDNNKADWQLLAIRSLLQEGKAPQASQQFNTLPEKLSAAQKQEQQLLSAELSAAQNNMDAAKAALSQLDVGALSEQQKSRYYQTQIKTAQGRPSIELLRAYIAQEPLLKGDEHQMNLDQTWLALTQMSPQESGALLINADENVLQGWVDLLNNYQNNRESPDQLQSAIQDWKTRYPHHPAAKNLPMQLNQVINYQPSSVSSIALLLPLNGQAQVFANAIQQGFNAAKNGQIATAAVSAPVAPPTDTAQAGQVTPSSDGQNAQSPAPYSDQAVASTTPAPAAQATSAGLSSSLPVKVYDTSSQPLANILTQAQQDGASLVIGPLLKNEVDQLASNPSPLNILALNQPERVENSPNICYFALSPEDEARDAAKFIHQQGKQQPLVLAPRGALGDRIVNAFAQAWNQQSGTSALQQRFGNSAELKQAINSGAGLSLNGQPVNVSQQQAQAGTTIGGLTIPSQVQPTASSSVSGNIDAVYIIATPDELALIKPMIDMRTSSRARPALYASSRSFQAGLGPDFRLEMEGLQFSDIPLLAGANPALMQQVSSQFKNDYSLVRLYAMGMDAWTLASHFGEMRQIPGHQISGATGMLSAGPDCTINRQLTWQQYRQGQLVPVL</sequence>
<comment type="function">
    <text evidence="1">Regulator of peptidoglycan synthesis that is essential for the function of penicillin-binding protein 1A (PBP1a).</text>
</comment>
<comment type="subunit">
    <text evidence="1">Interacts with PBP1a.</text>
</comment>
<comment type="subcellular location">
    <subcellularLocation>
        <location evidence="1">Cell outer membrane</location>
        <topology evidence="1">Lipid-anchor</topology>
        <orientation evidence="1">Periplasmic side</orientation>
    </subcellularLocation>
</comment>
<comment type="similarity">
    <text evidence="1">Belongs to the LpoA family.</text>
</comment>
<accession>D0KEP3</accession>
<dbReference type="EMBL" id="CP001790">
    <property type="protein sequence ID" value="ACX86167.1"/>
    <property type="molecule type" value="Genomic_DNA"/>
</dbReference>
<dbReference type="RefSeq" id="WP_012822118.1">
    <property type="nucleotide sequence ID" value="NC_013421.1"/>
</dbReference>
<dbReference type="SMR" id="D0KEP3"/>
<dbReference type="KEGG" id="pwa:Pecwa_0314"/>
<dbReference type="eggNOG" id="COG3107">
    <property type="taxonomic scope" value="Bacteria"/>
</dbReference>
<dbReference type="HOGENOM" id="CLU_026091_1_1_6"/>
<dbReference type="GO" id="GO:0031241">
    <property type="term" value="C:periplasmic side of cell outer membrane"/>
    <property type="evidence" value="ECO:0007669"/>
    <property type="project" value="UniProtKB-UniRule"/>
</dbReference>
<dbReference type="GO" id="GO:0030234">
    <property type="term" value="F:enzyme regulator activity"/>
    <property type="evidence" value="ECO:0007669"/>
    <property type="project" value="UniProtKB-UniRule"/>
</dbReference>
<dbReference type="GO" id="GO:0009252">
    <property type="term" value="P:peptidoglycan biosynthetic process"/>
    <property type="evidence" value="ECO:0007669"/>
    <property type="project" value="UniProtKB-UniRule"/>
</dbReference>
<dbReference type="GO" id="GO:0008360">
    <property type="term" value="P:regulation of cell shape"/>
    <property type="evidence" value="ECO:0007669"/>
    <property type="project" value="UniProtKB-KW"/>
</dbReference>
<dbReference type="CDD" id="cd06339">
    <property type="entry name" value="PBP1_YraM_LppC_lipoprotein-like"/>
    <property type="match status" value="1"/>
</dbReference>
<dbReference type="Gene3D" id="1.25.40.650">
    <property type="match status" value="1"/>
</dbReference>
<dbReference type="Gene3D" id="3.40.50.2300">
    <property type="match status" value="2"/>
</dbReference>
<dbReference type="Gene3D" id="1.25.40.10">
    <property type="entry name" value="Tetratricopeptide repeat domain"/>
    <property type="match status" value="1"/>
</dbReference>
<dbReference type="HAMAP" id="MF_01890">
    <property type="entry name" value="LpoA"/>
    <property type="match status" value="1"/>
</dbReference>
<dbReference type="InterPro" id="IPR007443">
    <property type="entry name" value="LpoA"/>
</dbReference>
<dbReference type="InterPro" id="IPR028082">
    <property type="entry name" value="Peripla_BP_I"/>
</dbReference>
<dbReference type="InterPro" id="IPR011990">
    <property type="entry name" value="TPR-like_helical_dom_sf"/>
</dbReference>
<dbReference type="PANTHER" id="PTHR38038">
    <property type="entry name" value="PENICILLIN-BINDING PROTEIN ACTIVATOR LPOA"/>
    <property type="match status" value="1"/>
</dbReference>
<dbReference type="PANTHER" id="PTHR38038:SF1">
    <property type="entry name" value="PENICILLIN-BINDING PROTEIN ACTIVATOR LPOA"/>
    <property type="match status" value="1"/>
</dbReference>
<dbReference type="Pfam" id="PF04348">
    <property type="entry name" value="LppC"/>
    <property type="match status" value="2"/>
</dbReference>
<dbReference type="SUPFAM" id="SSF53822">
    <property type="entry name" value="Periplasmic binding protein-like I"/>
    <property type="match status" value="1"/>
</dbReference>
<evidence type="ECO:0000255" key="1">
    <source>
        <dbReference type="HAMAP-Rule" id="MF_01890"/>
    </source>
</evidence>
<evidence type="ECO:0000256" key="2">
    <source>
        <dbReference type="SAM" id="MobiDB-lite"/>
    </source>
</evidence>
<organism>
    <name type="scientific">Pectobacterium parmentieri (strain WPP163)</name>
    <name type="common">Pectobacterium wasabiae (strain WPP163)</name>
    <dbReference type="NCBI Taxonomy" id="561231"/>
    <lineage>
        <taxon>Bacteria</taxon>
        <taxon>Pseudomonadati</taxon>
        <taxon>Pseudomonadota</taxon>
        <taxon>Gammaproteobacteria</taxon>
        <taxon>Enterobacterales</taxon>
        <taxon>Pectobacteriaceae</taxon>
        <taxon>Pectobacterium</taxon>
    </lineage>
</organism>
<reference key="1">
    <citation type="submission" date="2009-10" db="EMBL/GenBank/DDBJ databases">
        <title>Complete sequence of Pectobacterium wasabiae WPP163.</title>
        <authorList>
            <consortium name="US DOE Joint Genome Institute"/>
            <person name="Lucas S."/>
            <person name="Copeland A."/>
            <person name="Lapidus A."/>
            <person name="Glavina del Rio T."/>
            <person name="Tice H."/>
            <person name="Bruce D."/>
            <person name="Goodwin L."/>
            <person name="Pitluck S."/>
            <person name="Chertkov O."/>
            <person name="Brettin T."/>
            <person name="Detter J.C."/>
            <person name="Han C."/>
            <person name="Larimer F."/>
            <person name="Land M."/>
            <person name="Hauser L."/>
            <person name="Kyrpides N."/>
            <person name="Ovchinnikova G."/>
            <person name="Balakrishnan V."/>
            <person name="Glasner J."/>
            <person name="Perna N.T."/>
        </authorList>
    </citation>
    <scope>NUCLEOTIDE SEQUENCE [LARGE SCALE GENOMIC DNA]</scope>
    <source>
        <strain>WPP163</strain>
    </source>
</reference>
<feature type="signal peptide" evidence="1">
    <location>
        <begin position="1"/>
        <end position="26"/>
    </location>
</feature>
<feature type="chain" id="PRO_0000405940" description="Penicillin-binding protein activator LpoA">
    <location>
        <begin position="27"/>
        <end position="672"/>
    </location>
</feature>
<feature type="region of interest" description="Disordered" evidence="2">
    <location>
        <begin position="298"/>
        <end position="336"/>
    </location>
</feature>
<feature type="compositionally biased region" description="Polar residues" evidence="2">
    <location>
        <begin position="305"/>
        <end position="322"/>
    </location>
</feature>
<feature type="compositionally biased region" description="Low complexity" evidence="2">
    <location>
        <begin position="327"/>
        <end position="336"/>
    </location>
</feature>
<feature type="lipid moiety-binding region" description="N-palmitoyl cysteine" evidence="1">
    <location>
        <position position="27"/>
    </location>
</feature>
<feature type="lipid moiety-binding region" description="S-diacylglycerol cysteine" evidence="1">
    <location>
        <position position="27"/>
    </location>
</feature>
<proteinExistence type="inferred from homology"/>
<protein>
    <recommendedName>
        <fullName evidence="1">Penicillin-binding protein activator LpoA</fullName>
        <shortName evidence="1">PBP activator LpoA</shortName>
    </recommendedName>
</protein>